<comment type="subcellular location">
    <subcellularLocation>
        <location evidence="1">Secreted</location>
    </subcellularLocation>
</comment>
<comment type="tissue specificity">
    <text>Expressed by the venom duct.</text>
</comment>
<comment type="domain">
    <text evidence="1">The presence of a 'disulfide through disulfide knot' structurally defines this protein as a knottin.</text>
</comment>
<comment type="domain">
    <text>The cysteine framework is VI/VII (C-C-CC-C-C).</text>
</comment>
<comment type="miscellaneous">
    <text>This precursor corresponds to allele E1h. Has not been merged with other alleles since they may differ due to geographic variation (see strains in PubMed:19606224).</text>
</comment>
<comment type="similarity">
    <text evidence="3">Belongs to the conotoxin O1 superfamily.</text>
</comment>
<feature type="signal peptide" evidence="2">
    <location>
        <begin position="1" status="less than"/>
        <end position="17"/>
    </location>
</feature>
<feature type="propeptide" id="PRO_0000414644" evidence="1">
    <location>
        <begin position="18"/>
        <end position="41"/>
    </location>
</feature>
<feature type="peptide" id="PRO_0000414645" description="Conotoxin Eb6.19">
    <location>
        <begin position="42"/>
        <end position="69"/>
    </location>
</feature>
<feature type="disulfide bond" evidence="1">
    <location>
        <begin position="43"/>
        <end position="57"/>
    </location>
</feature>
<feature type="disulfide bond" evidence="1">
    <location>
        <begin position="50"/>
        <end position="61"/>
    </location>
</feature>
<feature type="disulfide bond" evidence="1">
    <location>
        <begin position="56"/>
        <end position="68"/>
    </location>
</feature>
<feature type="non-terminal residue">
    <location>
        <position position="1"/>
    </location>
</feature>
<accession>C7T188</accession>
<proteinExistence type="evidence at transcript level"/>
<evidence type="ECO:0000250" key="1"/>
<evidence type="ECO:0000255" key="2"/>
<evidence type="ECO:0000305" key="3"/>
<reference key="1">
    <citation type="journal article" date="2009" name="PLoS ONE">
        <title>Geographic variation in venom allelic composition and diets of the widespread predatory marine gastropod Conus ebraeus.</title>
        <authorList>
            <person name="Duda T.F. Jr."/>
            <person name="Chang D."/>
            <person name="Lewis B.D."/>
            <person name="Lee T."/>
        </authorList>
    </citation>
    <scope>NUCLEOTIDE SEQUENCE [MRNA]</scope>
    <source>
        <strain>Hawaii</strain>
        <strain>Okinawa</strain>
        <tissue>Venom duct</tissue>
    </source>
</reference>
<gene>
    <name type="primary">E1</name>
</gene>
<organism>
    <name type="scientific">Conus ebraeus</name>
    <name type="common">Hebrew cone</name>
    <dbReference type="NCBI Taxonomy" id="89425"/>
    <lineage>
        <taxon>Eukaryota</taxon>
        <taxon>Metazoa</taxon>
        <taxon>Spiralia</taxon>
        <taxon>Lophotrochozoa</taxon>
        <taxon>Mollusca</taxon>
        <taxon>Gastropoda</taxon>
        <taxon>Caenogastropoda</taxon>
        <taxon>Neogastropoda</taxon>
        <taxon>Conoidea</taxon>
        <taxon>Conidae</taxon>
        <taxon>Conus</taxon>
        <taxon>Virroconus</taxon>
    </lineage>
</organism>
<keyword id="KW-1015">Disulfide bond</keyword>
<keyword id="KW-0960">Knottin</keyword>
<keyword id="KW-0964">Secreted</keyword>
<keyword id="KW-0732">Signal</keyword>
<keyword id="KW-0800">Toxin</keyword>
<dbReference type="EMBL" id="FJ804536">
    <property type="protein sequence ID" value="ACU56811.1"/>
    <property type="molecule type" value="mRNA"/>
</dbReference>
<dbReference type="ConoServer" id="3841">
    <property type="toxin name" value="Eb6.19 precursor"/>
</dbReference>
<dbReference type="GO" id="GO:0005576">
    <property type="term" value="C:extracellular region"/>
    <property type="evidence" value="ECO:0007669"/>
    <property type="project" value="UniProtKB-SubCell"/>
</dbReference>
<dbReference type="GO" id="GO:0008200">
    <property type="term" value="F:ion channel inhibitor activity"/>
    <property type="evidence" value="ECO:0007669"/>
    <property type="project" value="InterPro"/>
</dbReference>
<dbReference type="GO" id="GO:0090729">
    <property type="term" value="F:toxin activity"/>
    <property type="evidence" value="ECO:0007669"/>
    <property type="project" value="UniProtKB-KW"/>
</dbReference>
<dbReference type="InterPro" id="IPR004214">
    <property type="entry name" value="Conotoxin"/>
</dbReference>
<dbReference type="Pfam" id="PF02950">
    <property type="entry name" value="Conotoxin"/>
    <property type="match status" value="1"/>
</dbReference>
<protein>
    <recommendedName>
        <fullName>Conotoxin Eb6.19</fullName>
    </recommendedName>
</protein>
<sequence>VLIIAVLFLTACQLTTAETYSRGRQKHRARRSTDKNSKWTRECTRSGGACNSHDQCCANFCRKATSTCM</sequence>
<name>O16J_CONEA</name>